<proteinExistence type="inferred from homology"/>
<sequence>MTQFTTSQQAAITHDGHDVLVSASAGSGKTTVLVERIIQKILKQHADITRMLIVTFTRAATAEMRTKIQTALKKALTERRHELSGEDRRHLANQIAMVNAAKISTLDAFSLQIVQTYYYVIDLDPGFRLLTDETERYMLQERVWDDLREQLYASDEAPAFEQLTANFSGDRDDSGLQDLMFELIRQAGATTDPKAYLEGLATPYAPEKWEATFSQQIWPRVKGQLLQIATSLTQASALANQLPNPIWYQQIQADLAPLQTLLETNAPTYDTVRSVLISHEFAAWSRISKGLDDADKDTKNAAKDLRDAAKKTWQNKLAPTFALAAEQIGDLLREAQPLVATLANVALKFEDALTAEKAARHVQDYSDIAHNALRILQQKDPQTGAPIADNYRASFDEVMVDEYQDISPLQEALLAAVSTTTPGDRFMVGDVKQSIYGFRLADPQLFIHKYQTFQDAPTDPAAPERIILAENFRSTKNVLAFTNLIFSQIMDPEVGDLSYDNAAALKYGALDYGDAHPAVKVLLYSKATSDEDSSDASELPGDADDNEPVDIATGQTQLVLAEIQRLINDPDAQLWDRQAQEYRRIHYRDITLLTRQTSQNSLIQTQFAAAGVPLFVADTKNFFKTTELMVMLALLKVIDNQKQDIPLVAVLRSPIVGLSADQLALIRLAAKQVPYYDAVTAFLQAEPKTPLAQRTHDMLTHFFNQLSHFRDLARENDLVTLLWAIYQDTGFLDYVGGTPGGSQRQANLQALIDRARTYEAGGFKGLFAFIHFITLMQKQDQDLAMPAQVDPDNDAVKLMTIHKSKGLEFPVVFLMQANKHFNMSDQTGTAILTKQGIGIKWLDPETRVEYELPQYQAAKAARQNQTLAEEMRLLYVALTRAQQRLYVVGATMSGNQLTSADKTVEKWAAAAEGEARVLAPQVRSGATSYLDWIGPALIRHPQARGLAETTIKPALVGDETEFTIEIDVNPQVTPTATPEKVSDDSGTMVDLSAWFKKAYPFQAATTTTGFQSVSEIKRAFDDPDTIDLVNADRFLGPKPPMRDLTAPAFLTETPSGISPAAIGTATHLLLQLVDLAKPITMASLRALRDQLTTTQVIAVDVAKHIDLTALIRFFETDLGRLLLAKPQQVHREVPFSMLLPADQVFEALADDPGEDVLIHGIIDGYVSDEQGVTLFDYKTDHNPNTAVLVDRYRGQLNLYAQALQDLQPKPVLHRYLVFLRTGTVVDLVASGAGK</sequence>
<keyword id="KW-0067">ATP-binding</keyword>
<keyword id="KW-0227">DNA damage</keyword>
<keyword id="KW-0234">DNA repair</keyword>
<keyword id="KW-0238">DNA-binding</keyword>
<keyword id="KW-0269">Exonuclease</keyword>
<keyword id="KW-0347">Helicase</keyword>
<keyword id="KW-0378">Hydrolase</keyword>
<keyword id="KW-0413">Isomerase</keyword>
<keyword id="KW-0540">Nuclease</keyword>
<keyword id="KW-0547">Nucleotide-binding</keyword>
<keyword id="KW-1185">Reference proteome</keyword>
<dbReference type="EC" id="3.1.-.-" evidence="1"/>
<dbReference type="EC" id="5.6.2.4" evidence="1"/>
<dbReference type="EMBL" id="CP000423">
    <property type="protein sequence ID" value="ABJ70265.1"/>
    <property type="molecule type" value="Genomic_DNA"/>
</dbReference>
<dbReference type="RefSeq" id="WP_011674519.1">
    <property type="nucleotide sequence ID" value="NC_008526.1"/>
</dbReference>
<dbReference type="RefSeq" id="YP_806707.1">
    <property type="nucleotide sequence ID" value="NC_008526.1"/>
</dbReference>
<dbReference type="SMR" id="Q038V7"/>
<dbReference type="STRING" id="321967.LSEI_1489"/>
<dbReference type="PaxDb" id="321967-LSEI_1489"/>
<dbReference type="KEGG" id="lca:LSEI_1489"/>
<dbReference type="PATRIC" id="fig|321967.11.peg.1470"/>
<dbReference type="HOGENOM" id="CLU_001114_3_1_9"/>
<dbReference type="Proteomes" id="UP000001651">
    <property type="component" value="Chromosome"/>
</dbReference>
<dbReference type="GO" id="GO:0005829">
    <property type="term" value="C:cytosol"/>
    <property type="evidence" value="ECO:0007669"/>
    <property type="project" value="TreeGrafter"/>
</dbReference>
<dbReference type="GO" id="GO:0033202">
    <property type="term" value="C:DNA helicase complex"/>
    <property type="evidence" value="ECO:0007669"/>
    <property type="project" value="TreeGrafter"/>
</dbReference>
<dbReference type="GO" id="GO:0043138">
    <property type="term" value="F:3'-5' DNA helicase activity"/>
    <property type="evidence" value="ECO:0007669"/>
    <property type="project" value="UniProtKB-UniRule"/>
</dbReference>
<dbReference type="GO" id="GO:0008408">
    <property type="term" value="F:3'-5' exonuclease activity"/>
    <property type="evidence" value="ECO:0007669"/>
    <property type="project" value="UniProtKB-UniRule"/>
</dbReference>
<dbReference type="GO" id="GO:0005524">
    <property type="term" value="F:ATP binding"/>
    <property type="evidence" value="ECO:0007669"/>
    <property type="project" value="UniProtKB-UniRule"/>
</dbReference>
<dbReference type="GO" id="GO:0016887">
    <property type="term" value="F:ATP hydrolysis activity"/>
    <property type="evidence" value="ECO:0007669"/>
    <property type="project" value="RHEA"/>
</dbReference>
<dbReference type="GO" id="GO:0003690">
    <property type="term" value="F:double-stranded DNA binding"/>
    <property type="evidence" value="ECO:0007669"/>
    <property type="project" value="UniProtKB-UniRule"/>
</dbReference>
<dbReference type="GO" id="GO:0000724">
    <property type="term" value="P:double-strand break repair via homologous recombination"/>
    <property type="evidence" value="ECO:0007669"/>
    <property type="project" value="UniProtKB-UniRule"/>
</dbReference>
<dbReference type="Gene3D" id="3.90.320.10">
    <property type="match status" value="1"/>
</dbReference>
<dbReference type="Gene3D" id="3.40.50.300">
    <property type="entry name" value="P-loop containing nucleotide triphosphate hydrolases"/>
    <property type="match status" value="4"/>
</dbReference>
<dbReference type="HAMAP" id="MF_01451">
    <property type="entry name" value="AddA"/>
    <property type="match status" value="1"/>
</dbReference>
<dbReference type="InterPro" id="IPR014152">
    <property type="entry name" value="AddA"/>
</dbReference>
<dbReference type="InterPro" id="IPR014017">
    <property type="entry name" value="DNA_helicase_UvrD-like_C"/>
</dbReference>
<dbReference type="InterPro" id="IPR000212">
    <property type="entry name" value="DNA_helicase_UvrD/REP"/>
</dbReference>
<dbReference type="InterPro" id="IPR027417">
    <property type="entry name" value="P-loop_NTPase"/>
</dbReference>
<dbReference type="InterPro" id="IPR011604">
    <property type="entry name" value="PDDEXK-like_dom_sf"/>
</dbReference>
<dbReference type="InterPro" id="IPR038726">
    <property type="entry name" value="PDDEXK_AddAB-type"/>
</dbReference>
<dbReference type="InterPro" id="IPR011335">
    <property type="entry name" value="Restrct_endonuc-II-like"/>
</dbReference>
<dbReference type="InterPro" id="IPR014016">
    <property type="entry name" value="UvrD-like_ATP-bd"/>
</dbReference>
<dbReference type="NCBIfam" id="TIGR02785">
    <property type="entry name" value="addA_Gpos"/>
    <property type="match status" value="1"/>
</dbReference>
<dbReference type="PANTHER" id="PTHR11070:SF48">
    <property type="entry name" value="ATP-DEPENDENT HELICASE_NUCLEASE SUBUNIT A"/>
    <property type="match status" value="1"/>
</dbReference>
<dbReference type="PANTHER" id="PTHR11070">
    <property type="entry name" value="UVRD / RECB / PCRA DNA HELICASE FAMILY MEMBER"/>
    <property type="match status" value="1"/>
</dbReference>
<dbReference type="Pfam" id="PF12705">
    <property type="entry name" value="PDDEXK_1"/>
    <property type="match status" value="1"/>
</dbReference>
<dbReference type="Pfam" id="PF00580">
    <property type="entry name" value="UvrD-helicase"/>
    <property type="match status" value="1"/>
</dbReference>
<dbReference type="Pfam" id="PF13361">
    <property type="entry name" value="UvrD_C"/>
    <property type="match status" value="1"/>
</dbReference>
<dbReference type="SUPFAM" id="SSF52540">
    <property type="entry name" value="P-loop containing nucleoside triphosphate hydrolases"/>
    <property type="match status" value="1"/>
</dbReference>
<dbReference type="SUPFAM" id="SSF52980">
    <property type="entry name" value="Restriction endonuclease-like"/>
    <property type="match status" value="1"/>
</dbReference>
<dbReference type="PROSITE" id="PS51198">
    <property type="entry name" value="UVRD_HELICASE_ATP_BIND"/>
    <property type="match status" value="1"/>
</dbReference>
<dbReference type="PROSITE" id="PS51217">
    <property type="entry name" value="UVRD_HELICASE_CTER"/>
    <property type="match status" value="1"/>
</dbReference>
<feature type="chain" id="PRO_0000379277" description="ATP-dependent helicase/nuclease subunit A">
    <location>
        <begin position="1"/>
        <end position="1234"/>
    </location>
</feature>
<feature type="domain" description="UvrD-like helicase ATP-binding" evidence="1">
    <location>
        <begin position="2"/>
        <end position="475"/>
    </location>
</feature>
<feature type="domain" description="UvrD-like helicase C-terminal" evidence="1">
    <location>
        <begin position="507"/>
        <end position="806"/>
    </location>
</feature>
<feature type="binding site" evidence="1">
    <location>
        <begin position="23"/>
        <end position="30"/>
    </location>
    <ligand>
        <name>ATP</name>
        <dbReference type="ChEBI" id="CHEBI:30616"/>
    </ligand>
</feature>
<comment type="function">
    <text evidence="1">The heterodimer acts as both an ATP-dependent DNA helicase and an ATP-dependent, dual-direction single-stranded exonuclease. Recognizes the chi site generating a DNA molecule suitable for the initiation of homologous recombination. The AddA nuclease domain is required for chi fragment generation; this subunit has the helicase and 3' -&gt; 5' nuclease activities.</text>
</comment>
<comment type="catalytic activity">
    <reaction evidence="1">
        <text>Couples ATP hydrolysis with the unwinding of duplex DNA by translocating in the 3'-5' direction.</text>
        <dbReference type="EC" id="5.6.2.4"/>
    </reaction>
</comment>
<comment type="catalytic activity">
    <reaction evidence="1">
        <text>ATP + H2O = ADP + phosphate + H(+)</text>
        <dbReference type="Rhea" id="RHEA:13065"/>
        <dbReference type="ChEBI" id="CHEBI:15377"/>
        <dbReference type="ChEBI" id="CHEBI:15378"/>
        <dbReference type="ChEBI" id="CHEBI:30616"/>
        <dbReference type="ChEBI" id="CHEBI:43474"/>
        <dbReference type="ChEBI" id="CHEBI:456216"/>
        <dbReference type="EC" id="5.6.2.4"/>
    </reaction>
</comment>
<comment type="cofactor">
    <cofactor evidence="1">
        <name>Mg(2+)</name>
        <dbReference type="ChEBI" id="CHEBI:18420"/>
    </cofactor>
</comment>
<comment type="subunit">
    <text evidence="1">Heterodimer of AddA and AddB/RexB.</text>
</comment>
<comment type="similarity">
    <text evidence="1">Belongs to the helicase family. AddA subfamily.</text>
</comment>
<organism>
    <name type="scientific">Lacticaseibacillus paracasei (strain ATCC 334 / BCRC 17002 / CCUG 31169 / CIP 107868 / KCTC 3260 / NRRL B-441)</name>
    <name type="common">Lactobacillus paracasei</name>
    <dbReference type="NCBI Taxonomy" id="321967"/>
    <lineage>
        <taxon>Bacteria</taxon>
        <taxon>Bacillati</taxon>
        <taxon>Bacillota</taxon>
        <taxon>Bacilli</taxon>
        <taxon>Lactobacillales</taxon>
        <taxon>Lactobacillaceae</taxon>
        <taxon>Lacticaseibacillus</taxon>
    </lineage>
</organism>
<name>ADDA_LACP3</name>
<accession>Q038V7</accession>
<gene>
    <name evidence="1" type="primary">addA</name>
    <name type="ordered locus">LSEI_1489</name>
</gene>
<protein>
    <recommendedName>
        <fullName evidence="1">ATP-dependent helicase/nuclease subunit A</fullName>
        <ecNumber evidence="1">3.1.-.-</ecNumber>
        <ecNumber evidence="1">5.6.2.4</ecNumber>
    </recommendedName>
    <alternativeName>
        <fullName evidence="1">ATP-dependent helicase/nuclease AddA</fullName>
    </alternativeName>
    <alternativeName>
        <fullName evidence="1">DNA 3'-5' helicase AddA</fullName>
    </alternativeName>
</protein>
<reference key="1">
    <citation type="journal article" date="2006" name="Proc. Natl. Acad. Sci. U.S.A.">
        <title>Comparative genomics of the lactic acid bacteria.</title>
        <authorList>
            <person name="Makarova K.S."/>
            <person name="Slesarev A."/>
            <person name="Wolf Y.I."/>
            <person name="Sorokin A."/>
            <person name="Mirkin B."/>
            <person name="Koonin E.V."/>
            <person name="Pavlov A."/>
            <person name="Pavlova N."/>
            <person name="Karamychev V."/>
            <person name="Polouchine N."/>
            <person name="Shakhova V."/>
            <person name="Grigoriev I."/>
            <person name="Lou Y."/>
            <person name="Rohksar D."/>
            <person name="Lucas S."/>
            <person name="Huang K."/>
            <person name="Goodstein D.M."/>
            <person name="Hawkins T."/>
            <person name="Plengvidhya V."/>
            <person name="Welker D."/>
            <person name="Hughes J."/>
            <person name="Goh Y."/>
            <person name="Benson A."/>
            <person name="Baldwin K."/>
            <person name="Lee J.-H."/>
            <person name="Diaz-Muniz I."/>
            <person name="Dosti B."/>
            <person name="Smeianov V."/>
            <person name="Wechter W."/>
            <person name="Barabote R."/>
            <person name="Lorca G."/>
            <person name="Altermann E."/>
            <person name="Barrangou R."/>
            <person name="Ganesan B."/>
            <person name="Xie Y."/>
            <person name="Rawsthorne H."/>
            <person name="Tamir D."/>
            <person name="Parker C."/>
            <person name="Breidt F."/>
            <person name="Broadbent J.R."/>
            <person name="Hutkins R."/>
            <person name="O'Sullivan D."/>
            <person name="Steele J."/>
            <person name="Unlu G."/>
            <person name="Saier M.H. Jr."/>
            <person name="Klaenhammer T."/>
            <person name="Richardson P."/>
            <person name="Kozyavkin S."/>
            <person name="Weimer B.C."/>
            <person name="Mills D.A."/>
        </authorList>
    </citation>
    <scope>NUCLEOTIDE SEQUENCE [LARGE SCALE GENOMIC DNA]</scope>
    <source>
        <strain>ATCC 334 / BCRC 17002 / CCUG 31169 / CIP 107868 / KCTC 3260 / NRRL B-441</strain>
    </source>
</reference>
<evidence type="ECO:0000255" key="1">
    <source>
        <dbReference type="HAMAP-Rule" id="MF_01451"/>
    </source>
</evidence>